<keyword id="KW-0028">Amino-acid biosynthesis</keyword>
<keyword id="KW-0057">Aromatic amino acid biosynthesis</keyword>
<keyword id="KW-0456">Lyase</keyword>
<keyword id="KW-1185">Reference proteome</keyword>
<keyword id="KW-0822">Tryptophan biosynthesis</keyword>
<proteinExistence type="evidence at protein level"/>
<gene>
    <name evidence="1" type="primary">trpA</name>
    <name type="ordered locus">DVU_0471</name>
</gene>
<feature type="chain" id="PRO_0000098777" description="Tryptophan synthase alpha chain">
    <location>
        <begin position="1"/>
        <end position="257"/>
    </location>
</feature>
<feature type="active site" description="Proton acceptor" evidence="1">
    <location>
        <position position="51"/>
    </location>
</feature>
<feature type="active site" description="Proton acceptor" evidence="1">
    <location>
        <position position="62"/>
    </location>
</feature>
<protein>
    <recommendedName>
        <fullName evidence="1">Tryptophan synthase alpha chain</fullName>
        <ecNumber evidence="1">4.2.1.20</ecNumber>
    </recommendedName>
</protein>
<name>TRPA_NITV2</name>
<organism>
    <name type="scientific">Nitratidesulfovibrio vulgaris (strain ATCC 29579 / DSM 644 / CCUG 34227 / NCIMB 8303 / VKM B-1760 / Hildenborough)</name>
    <name type="common">Desulfovibrio vulgaris</name>
    <dbReference type="NCBI Taxonomy" id="882"/>
    <lineage>
        <taxon>Bacteria</taxon>
        <taxon>Pseudomonadati</taxon>
        <taxon>Thermodesulfobacteriota</taxon>
        <taxon>Desulfovibrionia</taxon>
        <taxon>Desulfovibrionales</taxon>
        <taxon>Desulfovibrionaceae</taxon>
        <taxon>Nitratidesulfovibrio</taxon>
    </lineage>
</organism>
<evidence type="ECO:0000255" key="1">
    <source>
        <dbReference type="HAMAP-Rule" id="MF_00131"/>
    </source>
</evidence>
<sequence length="257" mass="27273">MSASRLERRIREAQAAGRPALIPFLTAGFPTKERFWDELEALDAAGADIIEVGVPFSDPVADGPVVAAASQRALESGVTLRWIMDGLAARKGRLRAGLVLMGYLNPFMQYGFERFVSDAADAGVAGCIIPDLPLDEDADLRALLAARDMDLIALVGPNTGEGRMREYAAVASGYVYVVSVMGTTGVRDGLPVEVADTLARARQCFSIPVALGFGISRPAQLEGLSHPPDAVIFGSALLRHLDAGGDAASFMKAWAER</sequence>
<dbReference type="EC" id="4.2.1.20" evidence="1"/>
<dbReference type="EMBL" id="AE017285">
    <property type="protein sequence ID" value="AAS94954.1"/>
    <property type="molecule type" value="Genomic_DNA"/>
</dbReference>
<dbReference type="RefSeq" id="WP_010937778.1">
    <property type="nucleotide sequence ID" value="NC_002937.3"/>
</dbReference>
<dbReference type="RefSeq" id="YP_009695.1">
    <property type="nucleotide sequence ID" value="NC_002937.3"/>
</dbReference>
<dbReference type="SMR" id="Q72EU7"/>
<dbReference type="IntAct" id="Q72EU7">
    <property type="interactions" value="4"/>
</dbReference>
<dbReference type="STRING" id="882.DVU_0471"/>
<dbReference type="PaxDb" id="882-DVU_0471"/>
<dbReference type="EnsemblBacteria" id="AAS94954">
    <property type="protein sequence ID" value="AAS94954"/>
    <property type="gene ID" value="DVU_0471"/>
</dbReference>
<dbReference type="KEGG" id="dvu:DVU_0471"/>
<dbReference type="PATRIC" id="fig|882.5.peg.447"/>
<dbReference type="eggNOG" id="COG0159">
    <property type="taxonomic scope" value="Bacteria"/>
</dbReference>
<dbReference type="HOGENOM" id="CLU_016734_0_0_7"/>
<dbReference type="OrthoDB" id="9804578at2"/>
<dbReference type="PhylomeDB" id="Q72EU7"/>
<dbReference type="UniPathway" id="UPA00035">
    <property type="reaction ID" value="UER00044"/>
</dbReference>
<dbReference type="Proteomes" id="UP000002194">
    <property type="component" value="Chromosome"/>
</dbReference>
<dbReference type="GO" id="GO:0005829">
    <property type="term" value="C:cytosol"/>
    <property type="evidence" value="ECO:0007669"/>
    <property type="project" value="TreeGrafter"/>
</dbReference>
<dbReference type="GO" id="GO:0004834">
    <property type="term" value="F:tryptophan synthase activity"/>
    <property type="evidence" value="ECO:0007669"/>
    <property type="project" value="UniProtKB-UniRule"/>
</dbReference>
<dbReference type="CDD" id="cd04724">
    <property type="entry name" value="Tryptophan_synthase_alpha"/>
    <property type="match status" value="1"/>
</dbReference>
<dbReference type="FunFam" id="3.20.20.70:FF:000037">
    <property type="entry name" value="Tryptophan synthase alpha chain"/>
    <property type="match status" value="1"/>
</dbReference>
<dbReference type="Gene3D" id="3.20.20.70">
    <property type="entry name" value="Aldolase class I"/>
    <property type="match status" value="1"/>
</dbReference>
<dbReference type="HAMAP" id="MF_00131">
    <property type="entry name" value="Trp_synth_alpha"/>
    <property type="match status" value="1"/>
</dbReference>
<dbReference type="InterPro" id="IPR013785">
    <property type="entry name" value="Aldolase_TIM"/>
</dbReference>
<dbReference type="InterPro" id="IPR011060">
    <property type="entry name" value="RibuloseP-bd_barrel"/>
</dbReference>
<dbReference type="InterPro" id="IPR018204">
    <property type="entry name" value="Trp_synthase_alpha_AS"/>
</dbReference>
<dbReference type="InterPro" id="IPR002028">
    <property type="entry name" value="Trp_synthase_suA"/>
</dbReference>
<dbReference type="NCBIfam" id="TIGR00262">
    <property type="entry name" value="trpA"/>
    <property type="match status" value="1"/>
</dbReference>
<dbReference type="PANTHER" id="PTHR43406:SF1">
    <property type="entry name" value="TRYPTOPHAN SYNTHASE ALPHA CHAIN, CHLOROPLASTIC"/>
    <property type="match status" value="1"/>
</dbReference>
<dbReference type="PANTHER" id="PTHR43406">
    <property type="entry name" value="TRYPTOPHAN SYNTHASE, ALPHA CHAIN"/>
    <property type="match status" value="1"/>
</dbReference>
<dbReference type="Pfam" id="PF00290">
    <property type="entry name" value="Trp_syntA"/>
    <property type="match status" value="1"/>
</dbReference>
<dbReference type="SUPFAM" id="SSF51366">
    <property type="entry name" value="Ribulose-phoshate binding barrel"/>
    <property type="match status" value="1"/>
</dbReference>
<dbReference type="PROSITE" id="PS00167">
    <property type="entry name" value="TRP_SYNTHASE_ALPHA"/>
    <property type="match status" value="1"/>
</dbReference>
<comment type="function">
    <text evidence="1">The alpha subunit is responsible for the aldol cleavage of indoleglycerol phosphate to indole and glyceraldehyde 3-phosphate.</text>
</comment>
<comment type="catalytic activity">
    <reaction evidence="1">
        <text>(1S,2R)-1-C-(indol-3-yl)glycerol 3-phosphate + L-serine = D-glyceraldehyde 3-phosphate + L-tryptophan + H2O</text>
        <dbReference type="Rhea" id="RHEA:10532"/>
        <dbReference type="ChEBI" id="CHEBI:15377"/>
        <dbReference type="ChEBI" id="CHEBI:33384"/>
        <dbReference type="ChEBI" id="CHEBI:57912"/>
        <dbReference type="ChEBI" id="CHEBI:58866"/>
        <dbReference type="ChEBI" id="CHEBI:59776"/>
        <dbReference type="EC" id="4.2.1.20"/>
    </reaction>
</comment>
<comment type="pathway">
    <text evidence="1">Amino-acid biosynthesis; L-tryptophan biosynthesis; L-tryptophan from chorismate: step 5/5.</text>
</comment>
<comment type="subunit">
    <text evidence="1">Tetramer of two alpha and two beta chains.</text>
</comment>
<comment type="interaction">
    <interactant intactId="EBI-10071399">
        <id>Q72EU7</id>
    </interactant>
    <interactant intactId="EBI-10071392">
        <id>Q72EU8</id>
        <label>trpB-2</label>
    </interactant>
    <organismsDiffer>false</organismsDiffer>
    <experiments>3</experiments>
</comment>
<comment type="similarity">
    <text evidence="1">Belongs to the TrpA family.</text>
</comment>
<accession>Q72EU7</accession>
<reference key="1">
    <citation type="journal article" date="2004" name="Nat. Biotechnol.">
        <title>The genome sequence of the anaerobic, sulfate-reducing bacterium Desulfovibrio vulgaris Hildenborough.</title>
        <authorList>
            <person name="Heidelberg J.F."/>
            <person name="Seshadri R."/>
            <person name="Haveman S.A."/>
            <person name="Hemme C.L."/>
            <person name="Paulsen I.T."/>
            <person name="Kolonay J.F."/>
            <person name="Eisen J.A."/>
            <person name="Ward N.L."/>
            <person name="Methe B.A."/>
            <person name="Brinkac L.M."/>
            <person name="Daugherty S.C."/>
            <person name="DeBoy R.T."/>
            <person name="Dodson R.J."/>
            <person name="Durkin A.S."/>
            <person name="Madupu R."/>
            <person name="Nelson W.C."/>
            <person name="Sullivan S.A."/>
            <person name="Fouts D.E."/>
            <person name="Haft D.H."/>
            <person name="Selengut J."/>
            <person name="Peterson J.D."/>
            <person name="Davidsen T.M."/>
            <person name="Zafar N."/>
            <person name="Zhou L."/>
            <person name="Radune D."/>
            <person name="Dimitrov G."/>
            <person name="Hance M."/>
            <person name="Tran K."/>
            <person name="Khouri H.M."/>
            <person name="Gill J."/>
            <person name="Utterback T.R."/>
            <person name="Feldblyum T.V."/>
            <person name="Wall J.D."/>
            <person name="Voordouw G."/>
            <person name="Fraser C.M."/>
        </authorList>
    </citation>
    <scope>NUCLEOTIDE SEQUENCE [LARGE SCALE GENOMIC DNA]</scope>
    <source>
        <strain>ATCC 29579 / DSM 644 / CCUG 34227 / NCIMB 8303 / VKM B-1760 / Hildenborough</strain>
    </source>
</reference>